<keyword id="KW-0067">ATP-binding</keyword>
<keyword id="KW-0903">Direct protein sequencing</keyword>
<keyword id="KW-0377">Hydrogenosome</keyword>
<keyword id="KW-0436">Ligase</keyword>
<keyword id="KW-0460">Magnesium</keyword>
<keyword id="KW-0479">Metal-binding</keyword>
<keyword id="KW-0547">Nucleotide-binding</keyword>
<keyword id="KW-0809">Transit peptide</keyword>
<keyword id="KW-0816">Tricarboxylic acid cycle</keyword>
<proteinExistence type="evidence at protein level"/>
<evidence type="ECO:0000255" key="1">
    <source>
        <dbReference type="HAMAP-Rule" id="MF_03219"/>
    </source>
</evidence>
<evidence type="ECO:0000269" key="2">
    <source>
    </source>
</evidence>
<evidence type="ECO:0000303" key="3">
    <source>
    </source>
</evidence>
<evidence type="ECO:0000305" key="4">
    <source>
    </source>
</evidence>
<organism>
    <name type="scientific">Trichomonas vaginalis</name>
    <dbReference type="NCBI Taxonomy" id="5722"/>
    <lineage>
        <taxon>Eukaryota</taxon>
        <taxon>Metamonada</taxon>
        <taxon>Parabasalia</taxon>
        <taxon>Trichomonadida</taxon>
        <taxon>Trichomonadidae</taxon>
        <taxon>Trichomonas</taxon>
    </lineage>
</organism>
<reference key="1">
    <citation type="journal article" date="1992" name="J. Bacteriol.">
        <title>Beta-succinyl-coenzyme A synthetase from Trichomonas vaginalis is a soluble hydrogenosomal protein with an amino-terminal sequence that resembles mitochondrial presequences.</title>
        <authorList>
            <person name="Lahti C.J."/>
            <person name="D'Oliveira C.E."/>
            <person name="Johnson P.J."/>
        </authorList>
    </citation>
    <scope>NUCLEOTIDE SEQUENCE [GENOMIC DNA]</scope>
    <scope>PROTEIN SEQUENCE OF 10-21</scope>
    <scope>SUBCELLULAR LOCATION</scope>
    <source>
        <strain>ATCC 30001 / NIH-C1</strain>
    </source>
</reference>
<protein>
    <recommendedName>
        <fullName evidence="4">Succinate--CoA ligase [ADP-forming] subunit beta, hydrogenosomal</fullName>
        <ecNumber evidence="1">6.2.1.5</ecNumber>
    </recommendedName>
    <alternativeName>
        <fullName evidence="1 3">Succinyl-CoA synthetase beta chain</fullName>
        <shortName evidence="1">SCS-beta</shortName>
    </alternativeName>
</protein>
<comment type="function">
    <text evidence="1">Succinyl-CoA synthetase functions in the citric acid cycle (TCA), coupling the hydrolysis of succinyl-CoA to the synthesis of ATP and thus represents the only step of substrate-level phosphorylation in the TCA. The beta subunit provides nucleotide specificity of the enzyme and binds the substrate succinate, while the binding sites for coenzyme A and phosphate are found in the alpha subunit.</text>
</comment>
<comment type="catalytic activity">
    <reaction evidence="1">
        <text>succinate + ATP + CoA = succinyl-CoA + ADP + phosphate</text>
        <dbReference type="Rhea" id="RHEA:17661"/>
        <dbReference type="ChEBI" id="CHEBI:30031"/>
        <dbReference type="ChEBI" id="CHEBI:30616"/>
        <dbReference type="ChEBI" id="CHEBI:43474"/>
        <dbReference type="ChEBI" id="CHEBI:57287"/>
        <dbReference type="ChEBI" id="CHEBI:57292"/>
        <dbReference type="ChEBI" id="CHEBI:456216"/>
        <dbReference type="EC" id="6.2.1.5"/>
    </reaction>
</comment>
<comment type="cofactor">
    <cofactor evidence="1">
        <name>Mg(2+)</name>
        <dbReference type="ChEBI" id="CHEBI:18420"/>
    </cofactor>
    <text evidence="1">Binds 1 Mg(2+) ion per subunit.</text>
</comment>
<comment type="pathway">
    <text evidence="1">Carbohydrate metabolism; tricarboxylic acid cycle; succinate from succinyl-CoA (ligase route): step 1/1.</text>
</comment>
<comment type="subunit">
    <text evidence="1">Heterodimer of an alpha and a beta subunit.</text>
</comment>
<comment type="subcellular location">
    <subcellularLocation>
        <location evidence="2">Hydrogenosome</location>
    </subcellularLocation>
</comment>
<comment type="similarity">
    <text evidence="1">Belongs to the succinate/malate CoA ligase beta subunit family.</text>
</comment>
<name>SUCB_TRIVA</name>
<dbReference type="EC" id="6.2.1.5" evidence="1"/>
<dbReference type="EMBL" id="M97553">
    <property type="protein sequence ID" value="AAA30326.1"/>
    <property type="molecule type" value="Genomic_DNA"/>
</dbReference>
<dbReference type="PIR" id="A45242">
    <property type="entry name" value="A45242"/>
</dbReference>
<dbReference type="SMR" id="Q03184"/>
<dbReference type="VEuPathDB" id="TrichDB:TVAG_259190"/>
<dbReference type="VEuPathDB" id="TrichDB:TVAGG3_0652610"/>
<dbReference type="eggNOG" id="KOG2799">
    <property type="taxonomic scope" value="Eukaryota"/>
</dbReference>
<dbReference type="BioCyc" id="MetaCyc:MONOMER-13302"/>
<dbReference type="UniPathway" id="UPA00223">
    <property type="reaction ID" value="UER00999"/>
</dbReference>
<dbReference type="GO" id="GO:0042566">
    <property type="term" value="C:hydrogenosome"/>
    <property type="evidence" value="ECO:0007669"/>
    <property type="project" value="UniProtKB-SubCell"/>
</dbReference>
<dbReference type="GO" id="GO:0005739">
    <property type="term" value="C:mitochondrion"/>
    <property type="evidence" value="ECO:0007669"/>
    <property type="project" value="TreeGrafter"/>
</dbReference>
<dbReference type="GO" id="GO:0042709">
    <property type="term" value="C:succinate-CoA ligase complex"/>
    <property type="evidence" value="ECO:0007669"/>
    <property type="project" value="TreeGrafter"/>
</dbReference>
<dbReference type="GO" id="GO:0005524">
    <property type="term" value="F:ATP binding"/>
    <property type="evidence" value="ECO:0007669"/>
    <property type="project" value="UniProtKB-UniRule"/>
</dbReference>
<dbReference type="GO" id="GO:0000287">
    <property type="term" value="F:magnesium ion binding"/>
    <property type="evidence" value="ECO:0007669"/>
    <property type="project" value="UniProtKB-UniRule"/>
</dbReference>
<dbReference type="GO" id="GO:0004775">
    <property type="term" value="F:succinate-CoA ligase (ADP-forming) activity"/>
    <property type="evidence" value="ECO:0007669"/>
    <property type="project" value="UniProtKB-UniRule"/>
</dbReference>
<dbReference type="GO" id="GO:0006104">
    <property type="term" value="P:succinyl-CoA metabolic process"/>
    <property type="evidence" value="ECO:0007669"/>
    <property type="project" value="TreeGrafter"/>
</dbReference>
<dbReference type="GO" id="GO:0006099">
    <property type="term" value="P:tricarboxylic acid cycle"/>
    <property type="evidence" value="ECO:0007669"/>
    <property type="project" value="UniProtKB-UniRule"/>
</dbReference>
<dbReference type="FunFam" id="3.30.1490.20:FF:000002">
    <property type="entry name" value="Succinate--CoA ligase [ADP-forming] subunit beta"/>
    <property type="match status" value="1"/>
</dbReference>
<dbReference type="FunFam" id="3.30.470.20:FF:000002">
    <property type="entry name" value="Succinate--CoA ligase [ADP-forming] subunit beta"/>
    <property type="match status" value="1"/>
</dbReference>
<dbReference type="FunFam" id="3.40.50.261:FF:000001">
    <property type="entry name" value="Succinate--CoA ligase [ADP-forming] subunit beta"/>
    <property type="match status" value="1"/>
</dbReference>
<dbReference type="Gene3D" id="3.30.1490.20">
    <property type="entry name" value="ATP-grasp fold, A domain"/>
    <property type="match status" value="1"/>
</dbReference>
<dbReference type="Gene3D" id="3.30.470.20">
    <property type="entry name" value="ATP-grasp fold, B domain"/>
    <property type="match status" value="1"/>
</dbReference>
<dbReference type="Gene3D" id="3.40.50.261">
    <property type="entry name" value="Succinyl-CoA synthetase domains"/>
    <property type="match status" value="1"/>
</dbReference>
<dbReference type="HAMAP" id="MF_00558">
    <property type="entry name" value="Succ_CoA_beta"/>
    <property type="match status" value="1"/>
</dbReference>
<dbReference type="InterPro" id="IPR013650">
    <property type="entry name" value="ATP-grasp_succ-CoA_synth-type"/>
</dbReference>
<dbReference type="InterPro" id="IPR013815">
    <property type="entry name" value="ATP_grasp_subdomain_1"/>
</dbReference>
<dbReference type="InterPro" id="IPR017866">
    <property type="entry name" value="Succ-CoA_synthase_bsu_CS"/>
</dbReference>
<dbReference type="InterPro" id="IPR005811">
    <property type="entry name" value="SUCC_ACL_C"/>
</dbReference>
<dbReference type="InterPro" id="IPR005809">
    <property type="entry name" value="Succ_CoA_ligase-like_bsu"/>
</dbReference>
<dbReference type="InterPro" id="IPR016102">
    <property type="entry name" value="Succinyl-CoA_synth-like"/>
</dbReference>
<dbReference type="NCBIfam" id="NF001913">
    <property type="entry name" value="PRK00696.1"/>
    <property type="match status" value="1"/>
</dbReference>
<dbReference type="NCBIfam" id="TIGR01016">
    <property type="entry name" value="sucCoAbeta"/>
    <property type="match status" value="1"/>
</dbReference>
<dbReference type="PANTHER" id="PTHR11815:SF10">
    <property type="entry name" value="SUCCINATE--COA LIGASE [GDP-FORMING] SUBUNIT BETA, MITOCHONDRIAL"/>
    <property type="match status" value="1"/>
</dbReference>
<dbReference type="PANTHER" id="PTHR11815">
    <property type="entry name" value="SUCCINYL-COA SYNTHETASE BETA CHAIN"/>
    <property type="match status" value="1"/>
</dbReference>
<dbReference type="Pfam" id="PF08442">
    <property type="entry name" value="ATP-grasp_2"/>
    <property type="match status" value="1"/>
</dbReference>
<dbReference type="Pfam" id="PF00549">
    <property type="entry name" value="Ligase_CoA"/>
    <property type="match status" value="1"/>
</dbReference>
<dbReference type="PIRSF" id="PIRSF001554">
    <property type="entry name" value="SucCS_beta"/>
    <property type="match status" value="1"/>
</dbReference>
<dbReference type="SUPFAM" id="SSF56059">
    <property type="entry name" value="Glutathione synthetase ATP-binding domain-like"/>
    <property type="match status" value="1"/>
</dbReference>
<dbReference type="SUPFAM" id="SSF52210">
    <property type="entry name" value="Succinyl-CoA synthetase domains"/>
    <property type="match status" value="1"/>
</dbReference>
<dbReference type="PROSITE" id="PS01217">
    <property type="entry name" value="SUCCINYL_COA_LIG_3"/>
    <property type="match status" value="1"/>
</dbReference>
<sequence>MLSSSFARNFNILEWQSKEICAKYNVAAGINLVARSPEEAAEAFRKMNLPAAVIKAQVYCGGRGKGHWLETGFKSGVHFVKSADEAAKIAKEMLGHHLVTKQTGKDGLLCQAVMLSDPVEVKRELYFAILLDRQTQSPVVIASTEGGVEIEEVAAHHPEKIHKFVLDGVEGITEEVAKNISTKLGLTGKAYDNGVVEMQKLWKLFVGSDATQVEVNPLAETTDGRIITVDSKFNFDDSAHYRQKQIFGYRDLKQVNPFEIRAEKYGLNYVPLDGNVACLVNGAGLAMATMDVIKLAGGDPANFLDLGGAASEAAVTEGFTIISQQSHVKAILVNIFGGIVRCDMVAAGVIAAFKKVGLKVPLVVRLEGTNVEAGKKLIRESGLPIISADNLTDAGEKAVKAAKGEKF</sequence>
<accession>Q03184</accession>
<feature type="transit peptide" description="Hydrogenosome" evidence="2">
    <location>
        <begin position="1"/>
        <end position="9"/>
    </location>
</feature>
<feature type="chain" id="PRO_0000033361" description="Succinate--CoA ligase [ADP-forming] subunit beta, hydrogenosomal">
    <location>
        <begin position="10"/>
        <end position="407"/>
    </location>
</feature>
<feature type="domain" description="ATP-grasp" evidence="1">
    <location>
        <begin position="18"/>
        <end position="261"/>
    </location>
</feature>
<feature type="binding site" evidence="1">
    <location>
        <position position="55"/>
    </location>
    <ligand>
        <name>ATP</name>
        <dbReference type="ChEBI" id="CHEBI:30616"/>
    </ligand>
</feature>
<feature type="binding site" evidence="1">
    <location>
        <begin position="62"/>
        <end position="64"/>
    </location>
    <ligand>
        <name>ATP</name>
        <dbReference type="ChEBI" id="CHEBI:30616"/>
    </ligand>
</feature>
<feature type="binding site" evidence="1">
    <location>
        <position position="124"/>
    </location>
    <ligand>
        <name>ATP</name>
        <dbReference type="ChEBI" id="CHEBI:30616"/>
    </ligand>
</feature>
<feature type="binding site" evidence="1">
    <location>
        <position position="216"/>
    </location>
    <ligand>
        <name>Mg(2+)</name>
        <dbReference type="ChEBI" id="CHEBI:18420"/>
    </ligand>
</feature>
<feature type="binding site" evidence="1">
    <location>
        <position position="230"/>
    </location>
    <ligand>
        <name>Mg(2+)</name>
        <dbReference type="ChEBI" id="CHEBI:18420"/>
    </ligand>
</feature>
<feature type="binding site" evidence="1">
    <location>
        <position position="281"/>
    </location>
    <ligand>
        <name>substrate</name>
        <note>ligand shared with subunit alpha</note>
    </ligand>
</feature>
<feature type="binding site" evidence="1">
    <location>
        <begin position="338"/>
        <end position="340"/>
    </location>
    <ligand>
        <name>substrate</name>
        <note>ligand shared with subunit alpha</note>
    </ligand>
</feature>